<organism>
    <name type="scientific">Methanoregula boonei (strain DSM 21154 / JCM 14090 / 6A8)</name>
    <dbReference type="NCBI Taxonomy" id="456442"/>
    <lineage>
        <taxon>Archaea</taxon>
        <taxon>Methanobacteriati</taxon>
        <taxon>Methanobacteriota</taxon>
        <taxon>Stenosarchaea group</taxon>
        <taxon>Methanomicrobia</taxon>
        <taxon>Methanomicrobiales</taxon>
        <taxon>Methanoregulaceae</taxon>
        <taxon>Methanoregula</taxon>
    </lineage>
</organism>
<protein>
    <recommendedName>
        <fullName evidence="1">Probable L-tyrosine/L-aspartate decarboxylase</fullName>
        <shortName evidence="1">TDC/ADC</shortName>
        <ecNumber evidence="1">4.1.1.11</ecNumber>
        <ecNumber evidence="1">4.1.1.25</ecNumber>
    </recommendedName>
</protein>
<dbReference type="EC" id="4.1.1.11" evidence="1"/>
<dbReference type="EC" id="4.1.1.25" evidence="1"/>
<dbReference type="EMBL" id="CP000780">
    <property type="protein sequence ID" value="ABS56680.1"/>
    <property type="molecule type" value="Genomic_DNA"/>
</dbReference>
<dbReference type="RefSeq" id="WP_012107738.1">
    <property type="nucleotide sequence ID" value="NC_009712.1"/>
</dbReference>
<dbReference type="SMR" id="A7IAB9"/>
<dbReference type="STRING" id="456442.Mboo_2166"/>
<dbReference type="GeneID" id="5411277"/>
<dbReference type="KEGG" id="mbn:Mboo_2166"/>
<dbReference type="eggNOG" id="arCOG00027">
    <property type="taxonomic scope" value="Archaea"/>
</dbReference>
<dbReference type="HOGENOM" id="CLU_028929_2_1_2"/>
<dbReference type="OrthoDB" id="56891at2157"/>
<dbReference type="UniPathway" id="UPA00080"/>
<dbReference type="UniPathway" id="UPA00241"/>
<dbReference type="Proteomes" id="UP000002408">
    <property type="component" value="Chromosome"/>
</dbReference>
<dbReference type="GO" id="GO:0004068">
    <property type="term" value="F:aspartate 1-decarboxylase activity"/>
    <property type="evidence" value="ECO:0007669"/>
    <property type="project" value="UniProtKB-UniRule"/>
</dbReference>
<dbReference type="GO" id="GO:0030170">
    <property type="term" value="F:pyridoxal phosphate binding"/>
    <property type="evidence" value="ECO:0007669"/>
    <property type="project" value="UniProtKB-UniRule"/>
</dbReference>
<dbReference type="GO" id="GO:0004837">
    <property type="term" value="F:tyrosine decarboxylase activity"/>
    <property type="evidence" value="ECO:0007669"/>
    <property type="project" value="UniProtKB-UniRule"/>
</dbReference>
<dbReference type="GO" id="GO:0019752">
    <property type="term" value="P:carboxylic acid metabolic process"/>
    <property type="evidence" value="ECO:0007669"/>
    <property type="project" value="InterPro"/>
</dbReference>
<dbReference type="GO" id="GO:0015937">
    <property type="term" value="P:coenzyme A biosynthetic process"/>
    <property type="evidence" value="ECO:0007669"/>
    <property type="project" value="UniProtKB-UniRule"/>
</dbReference>
<dbReference type="GO" id="GO:2001120">
    <property type="term" value="P:methanofuran biosynthetic process"/>
    <property type="evidence" value="ECO:0007669"/>
    <property type="project" value="UniProtKB-UniRule"/>
</dbReference>
<dbReference type="Gene3D" id="3.90.1150.10">
    <property type="entry name" value="Aspartate Aminotransferase, domain 1"/>
    <property type="match status" value="1"/>
</dbReference>
<dbReference type="Gene3D" id="3.40.640.10">
    <property type="entry name" value="Type I PLP-dependent aspartate aminotransferase-like (Major domain)"/>
    <property type="match status" value="1"/>
</dbReference>
<dbReference type="HAMAP" id="MF_01610">
    <property type="entry name" value="MfnA_decarbox"/>
    <property type="match status" value="1"/>
</dbReference>
<dbReference type="InterPro" id="IPR050477">
    <property type="entry name" value="GrpII_AminoAcid_Decarb"/>
</dbReference>
<dbReference type="InterPro" id="IPR020931">
    <property type="entry name" value="MfnA"/>
</dbReference>
<dbReference type="InterPro" id="IPR002129">
    <property type="entry name" value="PyrdxlP-dep_de-COase"/>
</dbReference>
<dbReference type="InterPro" id="IPR015424">
    <property type="entry name" value="PyrdxlP-dep_Trfase"/>
</dbReference>
<dbReference type="InterPro" id="IPR015421">
    <property type="entry name" value="PyrdxlP-dep_Trfase_major"/>
</dbReference>
<dbReference type="InterPro" id="IPR015422">
    <property type="entry name" value="PyrdxlP-dep_Trfase_small"/>
</dbReference>
<dbReference type="NCBIfam" id="TIGR03812">
    <property type="entry name" value="tyr_de_CO2_Arch"/>
    <property type="match status" value="1"/>
</dbReference>
<dbReference type="PANTHER" id="PTHR42735">
    <property type="match status" value="1"/>
</dbReference>
<dbReference type="PANTHER" id="PTHR42735:SF6">
    <property type="entry name" value="SPHINGOSINE-1-PHOSPHATE LYASE 1"/>
    <property type="match status" value="1"/>
</dbReference>
<dbReference type="Pfam" id="PF00282">
    <property type="entry name" value="Pyridoxal_deC"/>
    <property type="match status" value="1"/>
</dbReference>
<dbReference type="SUPFAM" id="SSF53383">
    <property type="entry name" value="PLP-dependent transferases"/>
    <property type="match status" value="1"/>
</dbReference>
<accession>A7IAB9</accession>
<proteinExistence type="inferred from homology"/>
<feature type="chain" id="PRO_0000323513" description="Probable L-tyrosine/L-aspartate decarboxylase">
    <location>
        <begin position="1"/>
        <end position="365"/>
    </location>
</feature>
<feature type="modified residue" description="N6-(pyridoxal phosphate)lysine" evidence="1">
    <location>
        <position position="224"/>
    </location>
</feature>
<gene>
    <name evidence="1" type="primary">mfnA</name>
    <name type="ordered locus">Mboo_2166</name>
</gene>
<reference key="1">
    <citation type="journal article" date="2015" name="Microbiology">
        <title>Genome of Methanoregula boonei 6A8 reveals adaptations to oligotrophic peatland environments.</title>
        <authorList>
            <person name="Braeuer S."/>
            <person name="Cadillo-Quiroz H."/>
            <person name="Kyrpides N."/>
            <person name="Woyke T."/>
            <person name="Goodwin L."/>
            <person name="Detter C."/>
            <person name="Podell S."/>
            <person name="Yavitt J.B."/>
            <person name="Zinder S.H."/>
        </authorList>
    </citation>
    <scope>NUCLEOTIDE SEQUENCE [LARGE SCALE GENOMIC DNA]</scope>
    <source>
        <strain>DSM 21154 / JCM 14090 / 6A8</strain>
    </source>
</reference>
<comment type="function">
    <text evidence="1">Catalyzes the decarboxylation of L-tyrosine to produce tyramine for methanofuran biosynthesis. Can also catalyze the decarboxylation of L-aspartate to produce beta-alanine for coenzyme A (CoA) biosynthesis.</text>
</comment>
<comment type="catalytic activity">
    <reaction evidence="1">
        <text>L-tyrosine + H(+) = tyramine + CO2</text>
        <dbReference type="Rhea" id="RHEA:14345"/>
        <dbReference type="ChEBI" id="CHEBI:15378"/>
        <dbReference type="ChEBI" id="CHEBI:16526"/>
        <dbReference type="ChEBI" id="CHEBI:58315"/>
        <dbReference type="ChEBI" id="CHEBI:327995"/>
        <dbReference type="EC" id="4.1.1.25"/>
    </reaction>
</comment>
<comment type="catalytic activity">
    <reaction evidence="1">
        <text>L-aspartate + H(+) = beta-alanine + CO2</text>
        <dbReference type="Rhea" id="RHEA:19497"/>
        <dbReference type="ChEBI" id="CHEBI:15378"/>
        <dbReference type="ChEBI" id="CHEBI:16526"/>
        <dbReference type="ChEBI" id="CHEBI:29991"/>
        <dbReference type="ChEBI" id="CHEBI:57966"/>
        <dbReference type="EC" id="4.1.1.11"/>
    </reaction>
</comment>
<comment type="cofactor">
    <cofactor evidence="1">
        <name>pyridoxal 5'-phosphate</name>
        <dbReference type="ChEBI" id="CHEBI:597326"/>
    </cofactor>
</comment>
<comment type="pathway">
    <text evidence="1">Cofactor biosynthesis; methanofuran biosynthesis.</text>
</comment>
<comment type="pathway">
    <text evidence="1">Cofactor biosynthesis; coenzyme A biosynthesis.</text>
</comment>
<comment type="similarity">
    <text evidence="1">Belongs to the group II decarboxylase family. MfnA subfamily.</text>
</comment>
<keyword id="KW-0210">Decarboxylase</keyword>
<keyword id="KW-0456">Lyase</keyword>
<keyword id="KW-0663">Pyridoxal phosphate</keyword>
<keyword id="KW-1185">Reference proteome</keyword>
<evidence type="ECO:0000255" key="1">
    <source>
        <dbReference type="HAMAP-Rule" id="MF_01610"/>
    </source>
</evidence>
<sequence>MLSNGISEDDLFSFLSLHKKEDLDHRYILSSMCTLPHPVAVRAHCMFMETNLGDPGLFPGTAALERLLVERLGTLFHHKNAGGYATSGGTESNIQALRLAKALRPGSSPNVVLPESVHFSFKKACDLLSLEMRSVPLGTDRRIMADKAAELIDKNTICLVGVAGTTEYGMVDPIADLAKIAAQQDIFLHVDAAFGGMVIPFLPKPVPFDFALPGVTTLAVDPHKMGMSTIPAGVLLTREPDMLDALNIDTPYLTVKKGYTLGGTRPGAPMAGALAVLDYLGISGMKAVVAGCMKNTERLIAGMETRGIQPAASPDVNVATFVCDRVPEPWKVSWTRAGHLRIVCMPHVTADRIEAFLSDFGDMYA</sequence>
<name>MFNA_METB6</name>